<proteinExistence type="inferred from homology"/>
<reference key="1">
    <citation type="submission" date="2008-02" db="EMBL/GenBank/DDBJ databases">
        <title>Complete sequence of Shewanella woodyi ATCC 51908.</title>
        <authorList>
            <consortium name="US DOE Joint Genome Institute"/>
            <person name="Copeland A."/>
            <person name="Lucas S."/>
            <person name="Lapidus A."/>
            <person name="Glavina del Rio T."/>
            <person name="Dalin E."/>
            <person name="Tice H."/>
            <person name="Bruce D."/>
            <person name="Goodwin L."/>
            <person name="Pitluck S."/>
            <person name="Sims D."/>
            <person name="Brettin T."/>
            <person name="Detter J.C."/>
            <person name="Han C."/>
            <person name="Kuske C.R."/>
            <person name="Schmutz J."/>
            <person name="Larimer F."/>
            <person name="Land M."/>
            <person name="Hauser L."/>
            <person name="Kyrpides N."/>
            <person name="Lykidis A."/>
            <person name="Zhao J.-S."/>
            <person name="Richardson P."/>
        </authorList>
    </citation>
    <scope>NUCLEOTIDE SEQUENCE [LARGE SCALE GENOMIC DNA]</scope>
    <source>
        <strain>ATCC 51908 / MS32</strain>
    </source>
</reference>
<evidence type="ECO:0000255" key="1">
    <source>
        <dbReference type="HAMAP-Rule" id="MF_00104"/>
    </source>
</evidence>
<keyword id="KW-0963">Cytoplasm</keyword>
<keyword id="KW-0255">Endonuclease</keyword>
<keyword id="KW-0378">Hydrolase</keyword>
<keyword id="KW-0460">Magnesium</keyword>
<keyword id="KW-0479">Metal-binding</keyword>
<keyword id="KW-0507">mRNA processing</keyword>
<keyword id="KW-0540">Nuclease</keyword>
<keyword id="KW-1185">Reference proteome</keyword>
<keyword id="KW-0694">RNA-binding</keyword>
<keyword id="KW-0698">rRNA processing</keyword>
<keyword id="KW-0699">rRNA-binding</keyword>
<keyword id="KW-0819">tRNA processing</keyword>
<dbReference type="EC" id="3.1.26.3" evidence="1"/>
<dbReference type="EMBL" id="CP000961">
    <property type="protein sequence ID" value="ACA85535.1"/>
    <property type="molecule type" value="Genomic_DNA"/>
</dbReference>
<dbReference type="RefSeq" id="WP_012323881.1">
    <property type="nucleotide sequence ID" value="NC_010506.1"/>
</dbReference>
<dbReference type="SMR" id="B1KI57"/>
<dbReference type="STRING" id="392500.Swoo_1243"/>
<dbReference type="KEGG" id="swd:Swoo_1243"/>
<dbReference type="eggNOG" id="COG0571">
    <property type="taxonomic scope" value="Bacteria"/>
</dbReference>
<dbReference type="HOGENOM" id="CLU_000907_1_1_6"/>
<dbReference type="Proteomes" id="UP000002168">
    <property type="component" value="Chromosome"/>
</dbReference>
<dbReference type="GO" id="GO:0005737">
    <property type="term" value="C:cytoplasm"/>
    <property type="evidence" value="ECO:0007669"/>
    <property type="project" value="UniProtKB-SubCell"/>
</dbReference>
<dbReference type="GO" id="GO:0003725">
    <property type="term" value="F:double-stranded RNA binding"/>
    <property type="evidence" value="ECO:0007669"/>
    <property type="project" value="TreeGrafter"/>
</dbReference>
<dbReference type="GO" id="GO:0046872">
    <property type="term" value="F:metal ion binding"/>
    <property type="evidence" value="ECO:0007669"/>
    <property type="project" value="UniProtKB-KW"/>
</dbReference>
<dbReference type="GO" id="GO:0004525">
    <property type="term" value="F:ribonuclease III activity"/>
    <property type="evidence" value="ECO:0007669"/>
    <property type="project" value="UniProtKB-UniRule"/>
</dbReference>
<dbReference type="GO" id="GO:0019843">
    <property type="term" value="F:rRNA binding"/>
    <property type="evidence" value="ECO:0007669"/>
    <property type="project" value="UniProtKB-KW"/>
</dbReference>
<dbReference type="GO" id="GO:0006397">
    <property type="term" value="P:mRNA processing"/>
    <property type="evidence" value="ECO:0007669"/>
    <property type="project" value="UniProtKB-UniRule"/>
</dbReference>
<dbReference type="GO" id="GO:0010468">
    <property type="term" value="P:regulation of gene expression"/>
    <property type="evidence" value="ECO:0007669"/>
    <property type="project" value="TreeGrafter"/>
</dbReference>
<dbReference type="GO" id="GO:0006364">
    <property type="term" value="P:rRNA processing"/>
    <property type="evidence" value="ECO:0007669"/>
    <property type="project" value="UniProtKB-UniRule"/>
</dbReference>
<dbReference type="GO" id="GO:0008033">
    <property type="term" value="P:tRNA processing"/>
    <property type="evidence" value="ECO:0007669"/>
    <property type="project" value="UniProtKB-KW"/>
</dbReference>
<dbReference type="CDD" id="cd10845">
    <property type="entry name" value="DSRM_RNAse_III_family"/>
    <property type="match status" value="1"/>
</dbReference>
<dbReference type="CDD" id="cd00593">
    <property type="entry name" value="RIBOc"/>
    <property type="match status" value="1"/>
</dbReference>
<dbReference type="FunFam" id="1.10.1520.10:FF:000001">
    <property type="entry name" value="Ribonuclease 3"/>
    <property type="match status" value="1"/>
</dbReference>
<dbReference type="FunFam" id="3.30.160.20:FF:000003">
    <property type="entry name" value="Ribonuclease 3"/>
    <property type="match status" value="1"/>
</dbReference>
<dbReference type="Gene3D" id="3.30.160.20">
    <property type="match status" value="1"/>
</dbReference>
<dbReference type="Gene3D" id="1.10.1520.10">
    <property type="entry name" value="Ribonuclease III domain"/>
    <property type="match status" value="1"/>
</dbReference>
<dbReference type="HAMAP" id="MF_00104">
    <property type="entry name" value="RNase_III"/>
    <property type="match status" value="1"/>
</dbReference>
<dbReference type="InterPro" id="IPR014720">
    <property type="entry name" value="dsRBD_dom"/>
</dbReference>
<dbReference type="InterPro" id="IPR011907">
    <property type="entry name" value="RNase_III"/>
</dbReference>
<dbReference type="InterPro" id="IPR000999">
    <property type="entry name" value="RNase_III_dom"/>
</dbReference>
<dbReference type="InterPro" id="IPR036389">
    <property type="entry name" value="RNase_III_sf"/>
</dbReference>
<dbReference type="NCBIfam" id="TIGR02191">
    <property type="entry name" value="RNaseIII"/>
    <property type="match status" value="1"/>
</dbReference>
<dbReference type="PANTHER" id="PTHR11207:SF0">
    <property type="entry name" value="RIBONUCLEASE 3"/>
    <property type="match status" value="1"/>
</dbReference>
<dbReference type="PANTHER" id="PTHR11207">
    <property type="entry name" value="RIBONUCLEASE III"/>
    <property type="match status" value="1"/>
</dbReference>
<dbReference type="Pfam" id="PF00035">
    <property type="entry name" value="dsrm"/>
    <property type="match status" value="1"/>
</dbReference>
<dbReference type="Pfam" id="PF14622">
    <property type="entry name" value="Ribonucleas_3_3"/>
    <property type="match status" value="1"/>
</dbReference>
<dbReference type="SMART" id="SM00358">
    <property type="entry name" value="DSRM"/>
    <property type="match status" value="1"/>
</dbReference>
<dbReference type="SMART" id="SM00535">
    <property type="entry name" value="RIBOc"/>
    <property type="match status" value="1"/>
</dbReference>
<dbReference type="SUPFAM" id="SSF54768">
    <property type="entry name" value="dsRNA-binding domain-like"/>
    <property type="match status" value="1"/>
</dbReference>
<dbReference type="SUPFAM" id="SSF69065">
    <property type="entry name" value="RNase III domain-like"/>
    <property type="match status" value="1"/>
</dbReference>
<dbReference type="PROSITE" id="PS50137">
    <property type="entry name" value="DS_RBD"/>
    <property type="match status" value="1"/>
</dbReference>
<dbReference type="PROSITE" id="PS00517">
    <property type="entry name" value="RNASE_3_1"/>
    <property type="match status" value="1"/>
</dbReference>
<dbReference type="PROSITE" id="PS50142">
    <property type="entry name" value="RNASE_3_2"/>
    <property type="match status" value="1"/>
</dbReference>
<organism>
    <name type="scientific">Shewanella woodyi (strain ATCC 51908 / MS32)</name>
    <dbReference type="NCBI Taxonomy" id="392500"/>
    <lineage>
        <taxon>Bacteria</taxon>
        <taxon>Pseudomonadati</taxon>
        <taxon>Pseudomonadota</taxon>
        <taxon>Gammaproteobacteria</taxon>
        <taxon>Alteromonadales</taxon>
        <taxon>Shewanellaceae</taxon>
        <taxon>Shewanella</taxon>
    </lineage>
</organism>
<name>RNC_SHEWM</name>
<sequence>MEPIKNIPRLCRTLGYDFSELALLDHALTHRSAASKHNERLEFLGDSILSIIISDALYHQFPKATEGDLSRMRATLVCGKMLAEIGFEFKLGDYLKLGPGELKSGGFRRESIIADAVEAIIGAVYLDSDLEVTRSLVLGWYKTRLETIQPINQKDPKTLLQELLQGYKKPLPVYKVTDIRGEAHAQTFTIECYVEELRKPVVGVASSRRKAEQLAAAQALELIKR</sequence>
<comment type="function">
    <text evidence="1">Digests double-stranded RNA. Involved in the processing of primary rRNA transcript to yield the immediate precursors to the large and small rRNAs (23S and 16S). Processes some mRNAs, and tRNAs when they are encoded in the rRNA operon. Processes pre-crRNA and tracrRNA of type II CRISPR loci if present in the organism.</text>
</comment>
<comment type="catalytic activity">
    <reaction evidence="1">
        <text>Endonucleolytic cleavage to 5'-phosphomonoester.</text>
        <dbReference type="EC" id="3.1.26.3"/>
    </reaction>
</comment>
<comment type="cofactor">
    <cofactor evidence="1">
        <name>Mg(2+)</name>
        <dbReference type="ChEBI" id="CHEBI:18420"/>
    </cofactor>
</comment>
<comment type="subunit">
    <text evidence="1">Homodimer.</text>
</comment>
<comment type="subcellular location">
    <subcellularLocation>
        <location evidence="1">Cytoplasm</location>
    </subcellularLocation>
</comment>
<comment type="similarity">
    <text evidence="1">Belongs to the ribonuclease III family.</text>
</comment>
<feature type="chain" id="PRO_1000094132" description="Ribonuclease 3">
    <location>
        <begin position="1"/>
        <end position="225"/>
    </location>
</feature>
<feature type="domain" description="RNase III" evidence="1">
    <location>
        <begin position="7"/>
        <end position="129"/>
    </location>
</feature>
<feature type="domain" description="DRBM" evidence="1">
    <location>
        <begin position="155"/>
        <end position="225"/>
    </location>
</feature>
<feature type="active site" evidence="1">
    <location>
        <position position="46"/>
    </location>
</feature>
<feature type="active site" evidence="1">
    <location>
        <position position="118"/>
    </location>
</feature>
<feature type="binding site" evidence="1">
    <location>
        <position position="42"/>
    </location>
    <ligand>
        <name>Mg(2+)</name>
        <dbReference type="ChEBI" id="CHEBI:18420"/>
    </ligand>
</feature>
<feature type="binding site" evidence="1">
    <location>
        <position position="115"/>
    </location>
    <ligand>
        <name>Mg(2+)</name>
        <dbReference type="ChEBI" id="CHEBI:18420"/>
    </ligand>
</feature>
<feature type="binding site" evidence="1">
    <location>
        <position position="118"/>
    </location>
    <ligand>
        <name>Mg(2+)</name>
        <dbReference type="ChEBI" id="CHEBI:18420"/>
    </ligand>
</feature>
<gene>
    <name evidence="1" type="primary">rnc</name>
    <name type="ordered locus">Swoo_1243</name>
</gene>
<accession>B1KI57</accession>
<protein>
    <recommendedName>
        <fullName evidence="1">Ribonuclease 3</fullName>
        <ecNumber evidence="1">3.1.26.3</ecNumber>
    </recommendedName>
    <alternativeName>
        <fullName evidence="1">Ribonuclease III</fullName>
        <shortName evidence="1">RNase III</shortName>
    </alternativeName>
</protein>